<evidence type="ECO:0000250" key="1">
    <source>
        <dbReference type="UniProtKB" id="Q3UH60"/>
    </source>
</evidence>
<evidence type="ECO:0000255" key="2">
    <source>
        <dbReference type="PROSITE-ProRule" id="PRU01260"/>
    </source>
</evidence>
<evidence type="ECO:0000256" key="3">
    <source>
        <dbReference type="SAM" id="MobiDB-lite"/>
    </source>
</evidence>
<evidence type="ECO:0000269" key="4">
    <source>
    </source>
</evidence>
<evidence type="ECO:0000269" key="5">
    <source>
    </source>
</evidence>
<evidence type="ECO:0000305" key="6"/>
<evidence type="ECO:0007744" key="7">
    <source>
    </source>
</evidence>
<evidence type="ECO:0007744" key="8">
    <source>
    </source>
</evidence>
<evidence type="ECO:0007744" key="9">
    <source>
    </source>
</evidence>
<evidence type="ECO:0007744" key="10">
    <source>
    </source>
</evidence>
<gene>
    <name type="primary">DIP2B</name>
    <name type="synonym">KIAA1463</name>
</gene>
<dbReference type="EMBL" id="AC078818">
    <property type="status" value="NOT_ANNOTATED_CDS"/>
    <property type="molecule type" value="Genomic_DNA"/>
</dbReference>
<dbReference type="EMBL" id="AC090058">
    <property type="status" value="NOT_ANNOTATED_CDS"/>
    <property type="molecule type" value="Genomic_DNA"/>
</dbReference>
<dbReference type="EMBL" id="CH471111">
    <property type="protein sequence ID" value="EAW58149.1"/>
    <property type="status" value="ALT_SEQ"/>
    <property type="molecule type" value="Genomic_DNA"/>
</dbReference>
<dbReference type="EMBL" id="AK091597">
    <property type="protein sequence ID" value="BAC03705.1"/>
    <property type="status" value="ALT_SEQ"/>
    <property type="molecule type" value="mRNA"/>
</dbReference>
<dbReference type="EMBL" id="AK097369">
    <property type="protein sequence ID" value="BAC05025.1"/>
    <property type="status" value="ALT_INIT"/>
    <property type="molecule type" value="mRNA"/>
</dbReference>
<dbReference type="EMBL" id="BC075027">
    <property type="protein sequence ID" value="AAH75027.1"/>
    <property type="status" value="ALT_SEQ"/>
    <property type="molecule type" value="mRNA"/>
</dbReference>
<dbReference type="EMBL" id="AB040896">
    <property type="protein sequence ID" value="BAA95987.2"/>
    <property type="molecule type" value="mRNA"/>
</dbReference>
<dbReference type="CCDS" id="CCDS31799.1"/>
<dbReference type="RefSeq" id="NP_775873.2">
    <property type="nucleotide sequence ID" value="NM_173602.3"/>
</dbReference>
<dbReference type="SMR" id="Q9P265"/>
<dbReference type="BioGRID" id="121656">
    <property type="interactions" value="70"/>
</dbReference>
<dbReference type="FunCoup" id="Q9P265">
    <property type="interactions" value="2544"/>
</dbReference>
<dbReference type="IntAct" id="Q9P265">
    <property type="interactions" value="38"/>
</dbReference>
<dbReference type="STRING" id="9606.ENSP00000301180"/>
<dbReference type="GlyGen" id="Q9P265">
    <property type="glycosylation" value="3 sites, 1 O-linked glycan (3 sites)"/>
</dbReference>
<dbReference type="iPTMnet" id="Q9P265"/>
<dbReference type="PhosphoSitePlus" id="Q9P265"/>
<dbReference type="SwissPalm" id="Q9P265"/>
<dbReference type="BioMuta" id="DIP2B"/>
<dbReference type="DMDM" id="172044681"/>
<dbReference type="jPOST" id="Q9P265"/>
<dbReference type="MassIVE" id="Q9P265"/>
<dbReference type="PaxDb" id="9606-ENSP00000301180"/>
<dbReference type="PeptideAtlas" id="Q9P265"/>
<dbReference type="ProteomicsDB" id="83736"/>
<dbReference type="Pumba" id="Q9P265"/>
<dbReference type="Antibodypedia" id="55127">
    <property type="antibodies" value="34 antibodies from 14 providers"/>
</dbReference>
<dbReference type="DNASU" id="57609"/>
<dbReference type="Ensembl" id="ENST00000301180.10">
    <property type="protein sequence ID" value="ENSP00000301180.5"/>
    <property type="gene ID" value="ENSG00000066084.13"/>
</dbReference>
<dbReference type="GeneID" id="57609"/>
<dbReference type="KEGG" id="hsa:57609"/>
<dbReference type="MANE-Select" id="ENST00000301180.10">
    <property type="protein sequence ID" value="ENSP00000301180.5"/>
    <property type="RefSeq nucleotide sequence ID" value="NM_173602.3"/>
    <property type="RefSeq protein sequence ID" value="NP_775873.2"/>
</dbReference>
<dbReference type="UCSC" id="uc001rwv.4">
    <property type="organism name" value="human"/>
</dbReference>
<dbReference type="AGR" id="HGNC:29284"/>
<dbReference type="CTD" id="57609"/>
<dbReference type="DisGeNET" id="57609"/>
<dbReference type="GeneCards" id="DIP2B"/>
<dbReference type="HGNC" id="HGNC:29284">
    <property type="gene designation" value="DIP2B"/>
</dbReference>
<dbReference type="HPA" id="ENSG00000066084">
    <property type="expression patterns" value="Low tissue specificity"/>
</dbReference>
<dbReference type="MalaCards" id="DIP2B"/>
<dbReference type="MIM" id="611379">
    <property type="type" value="gene"/>
</dbReference>
<dbReference type="neXtProt" id="NX_Q9P265"/>
<dbReference type="OpenTargets" id="ENSG00000066084"/>
<dbReference type="PharmGKB" id="PA143485449"/>
<dbReference type="VEuPathDB" id="HostDB:ENSG00000066084"/>
<dbReference type="eggNOG" id="KOG3628">
    <property type="taxonomic scope" value="Eukaryota"/>
</dbReference>
<dbReference type="GeneTree" id="ENSGT00950000182997"/>
<dbReference type="HOGENOM" id="CLU_001345_0_0_1"/>
<dbReference type="InParanoid" id="Q9P265"/>
<dbReference type="OMA" id="FYACLYI"/>
<dbReference type="OrthoDB" id="69964at2759"/>
<dbReference type="PAN-GO" id="Q9P265">
    <property type="GO annotations" value="0 GO annotations based on evolutionary models"/>
</dbReference>
<dbReference type="PhylomeDB" id="Q9P265"/>
<dbReference type="TreeFam" id="TF312871"/>
<dbReference type="PathwayCommons" id="Q9P265"/>
<dbReference type="SignaLink" id="Q9P265"/>
<dbReference type="BioGRID-ORCS" id="57609">
    <property type="hits" value="26 hits in 1151 CRISPR screens"/>
</dbReference>
<dbReference type="CD-CODE" id="FB4E32DD">
    <property type="entry name" value="Presynaptic clusters and postsynaptic densities"/>
</dbReference>
<dbReference type="ChiTaRS" id="DIP2B">
    <property type="organism name" value="human"/>
</dbReference>
<dbReference type="GenomeRNAi" id="57609"/>
<dbReference type="Pharos" id="Q9P265">
    <property type="development level" value="Tdark"/>
</dbReference>
<dbReference type="PRO" id="PR:Q9P265"/>
<dbReference type="Proteomes" id="UP000005640">
    <property type="component" value="Chromosome 12"/>
</dbReference>
<dbReference type="RNAct" id="Q9P265">
    <property type="molecule type" value="protein"/>
</dbReference>
<dbReference type="Bgee" id="ENSG00000066084">
    <property type="expression patterns" value="Expressed in inferior vagus X ganglion and 191 other cell types or tissues"/>
</dbReference>
<dbReference type="ExpressionAtlas" id="Q9P265">
    <property type="expression patterns" value="baseline and differential"/>
</dbReference>
<dbReference type="GO" id="GO:0030424">
    <property type="term" value="C:axon"/>
    <property type="evidence" value="ECO:0000250"/>
    <property type="project" value="UniProtKB"/>
</dbReference>
<dbReference type="GO" id="GO:0005737">
    <property type="term" value="C:cytoplasm"/>
    <property type="evidence" value="ECO:0000314"/>
    <property type="project" value="UniProtKB"/>
</dbReference>
<dbReference type="GO" id="GO:0030425">
    <property type="term" value="C:dendrite"/>
    <property type="evidence" value="ECO:0000250"/>
    <property type="project" value="UniProtKB"/>
</dbReference>
<dbReference type="GO" id="GO:0070062">
    <property type="term" value="C:extracellular exosome"/>
    <property type="evidence" value="ECO:0007005"/>
    <property type="project" value="UniProtKB"/>
</dbReference>
<dbReference type="GO" id="GO:0016020">
    <property type="term" value="C:membrane"/>
    <property type="evidence" value="ECO:0007005"/>
    <property type="project" value="UniProtKB"/>
</dbReference>
<dbReference type="GO" id="GO:0005634">
    <property type="term" value="C:nucleus"/>
    <property type="evidence" value="ECO:0000314"/>
    <property type="project" value="UniProtKB"/>
</dbReference>
<dbReference type="GO" id="GO:0043204">
    <property type="term" value="C:perikaryon"/>
    <property type="evidence" value="ECO:0000250"/>
    <property type="project" value="UniProtKB"/>
</dbReference>
<dbReference type="GO" id="GO:0043014">
    <property type="term" value="F:alpha-tubulin binding"/>
    <property type="evidence" value="ECO:0000250"/>
    <property type="project" value="UniProtKB"/>
</dbReference>
<dbReference type="GO" id="GO:0030517">
    <property type="term" value="P:negative regulation of axon extension"/>
    <property type="evidence" value="ECO:0000250"/>
    <property type="project" value="UniProtKB"/>
</dbReference>
<dbReference type="GO" id="GO:0007399">
    <property type="term" value="P:nervous system development"/>
    <property type="evidence" value="ECO:0007669"/>
    <property type="project" value="UniProtKB-KW"/>
</dbReference>
<dbReference type="GO" id="GO:2000758">
    <property type="term" value="P:positive regulation of peptidyl-lysine acetylation"/>
    <property type="evidence" value="ECO:0000250"/>
    <property type="project" value="UniProtKB"/>
</dbReference>
<dbReference type="CDD" id="cd05905">
    <property type="entry name" value="Dip2"/>
    <property type="match status" value="2"/>
</dbReference>
<dbReference type="FunFam" id="3.30.300.30:FF:000003">
    <property type="entry name" value="DIP2 disco-interacting protein 2 homolog A"/>
    <property type="match status" value="1"/>
</dbReference>
<dbReference type="FunFam" id="3.30.300.30:FF:000001">
    <property type="entry name" value="DIP2 disco-interacting protein 2 homolog C"/>
    <property type="match status" value="1"/>
</dbReference>
<dbReference type="FunFam" id="3.40.50.12780:FF:000004">
    <property type="entry name" value="Disco interacting protein 2 homolog A"/>
    <property type="match status" value="1"/>
</dbReference>
<dbReference type="FunFam" id="3.40.50.12780:FF:000002">
    <property type="entry name" value="Disco interacting protein 2 homolog B"/>
    <property type="match status" value="1"/>
</dbReference>
<dbReference type="Gene3D" id="3.30.300.30">
    <property type="match status" value="2"/>
</dbReference>
<dbReference type="Gene3D" id="3.40.50.12780">
    <property type="entry name" value="N-terminal domain of ligase-like"/>
    <property type="match status" value="2"/>
</dbReference>
<dbReference type="InterPro" id="IPR025110">
    <property type="entry name" value="AMP-bd_C"/>
</dbReference>
<dbReference type="InterPro" id="IPR045851">
    <property type="entry name" value="AMP-bd_C_sf"/>
</dbReference>
<dbReference type="InterPro" id="IPR000873">
    <property type="entry name" value="AMP-dep_synth/lig_dom"/>
</dbReference>
<dbReference type="InterPro" id="IPR042099">
    <property type="entry name" value="ANL_N_sf"/>
</dbReference>
<dbReference type="InterPro" id="IPR037337">
    <property type="entry name" value="Dip2-like_dom"/>
</dbReference>
<dbReference type="InterPro" id="IPR010506">
    <property type="entry name" value="DMAP1-bd"/>
</dbReference>
<dbReference type="PANTHER" id="PTHR22754">
    <property type="entry name" value="DISCO-INTERACTING PROTEIN 2 DIP2 -RELATED"/>
    <property type="match status" value="1"/>
</dbReference>
<dbReference type="PANTHER" id="PTHR22754:SF38">
    <property type="entry name" value="DISCO-INTERACTING PROTEIN 2 HOMOLOG B"/>
    <property type="match status" value="1"/>
</dbReference>
<dbReference type="Pfam" id="PF00501">
    <property type="entry name" value="AMP-binding"/>
    <property type="match status" value="2"/>
</dbReference>
<dbReference type="Pfam" id="PF23024">
    <property type="entry name" value="AMP-dom_DIP2-like"/>
    <property type="match status" value="1"/>
</dbReference>
<dbReference type="Pfam" id="PF06464">
    <property type="entry name" value="DMAP_binding"/>
    <property type="match status" value="1"/>
</dbReference>
<dbReference type="SMART" id="SM01137">
    <property type="entry name" value="DMAP_binding"/>
    <property type="match status" value="1"/>
</dbReference>
<dbReference type="SUPFAM" id="SSF56801">
    <property type="entry name" value="Acetyl-CoA synthetase-like"/>
    <property type="match status" value="2"/>
</dbReference>
<dbReference type="PROSITE" id="PS51912">
    <property type="entry name" value="DMAP1_BIND"/>
    <property type="match status" value="1"/>
</dbReference>
<sequence>MAERGLEPSPAAVAALPPEVRAQLAELELELSEGDITQKGYEKKRSKLLSPYSPQTQETDSAVQKELRNQTPAPSAAQTSAPSKYHRTRSGGARDERYRSDIHTEAVQAALAKHKEQKMALPMPTKRRSTFVQSPADACTPPDTSSASEDEGSLRRQAALSAALQQSLQNAESWINRSIQGSSTSSSASSTLSHGEVKGTSGSLADVFANTRIENFSAPPDVTTTTSSSSSSSSIRPANIDLPPSGIVKGMHKGSNRSSLMDTADGVPVSSRVSTKIQQLLNTLKRPKRPPLKEFFVDDSEEIVEVPQPDPNQPKPEGRQMTPVKGEPLGVICNWPPALESALQRWGTTQAKCSCLTALDMTGKPVYTLTYGKLWSRSLKLAYTLLNKLGTKNEPVLKPGDRVALVYPNNDPVMFMVAFYGCLLAEVIPVPIEVPLTRKDAGGQQIGFLLGSCGIALALTSEVCLKGLPKTQNGEIVQFKGWPRLKWVVTDSKYLSKPPKDWQPHISPAGTEPAYIEYKTSKEGSVMGVTVSRLAMLSHCQALSQACNYSEGETIVNVLDFKKDAGLWHGMFANVMNKMHTISVPYSVMKTCPLSWVQRVHAHKAKVALVKCRDLHWAMMAHRDQRDVSLSSLRMLIVTDGANPWSVSSCDAFLSLFQSHGLKPEAICPCATSAEAMTVAIRRPGVPGAPLPGRAILSMNGLSYGVIRVNTEDKNSALTVQDVGHVMPGGMMCIVKPDGPPQLCKTDEIGEICVSSRTGGMMYFGLAGVTKNTFEVIPVNSAGSPVGDVPFIRSGLLGFVGPGSLVFVVGKMDGLLMVSGRRHNADDIVATGLAVESIKTVYRGRIAVFSVSVFYDERIVVVAEQRPDASEEDSFQWMSRVLQAIDSIHQVGVYCLALVPANTLPKTPLGGIHISQTKQLFLEGSLHPCNILMCPHTCVTNLPKPRQKQPGVGPASVMVGNLVAGKRIAQAAGRDLGQIEENDLVRKHQFLAEILQWRAQATPDHVLFMLLNAKGTTVCTASCLQLHKRAERIASVLGDKGHLNAGDNVVLLYPPGIELIAAFYGCLYAGCIPVTVRPPHAQNLTATLPTVRMIVDVSKAACILTSQTLMRLLRSREAAAAVDVKTWPTIIDTDDLPRKRLPQLYKPPTPEMLAYLDFSVSTTGMLTGVKMSHSAVNALCRAIKLQCELYSSRQIAICLDPYCGLGFALWCLCSVYSGHQSVLIPPMELENNLFLWLSTVNQYKIRDTFCSYSVMELCTKGLGNQVEVLKTRGINLSCVRTCVVVAEERPRVALQQSFSKLFKDIGLSPRAVSTTFGSRVNVAICLQGTSGPDPTTVYVDLKSLRHDRVRLVERGAPQSLLLSESGKILPGVKVVIVNPETKGPVGDSHLGEIWVNSPHTASGYYTIYDSETLQADHFNTRLSFGDAAQTLWARTGYLGFVRRTELTAATGERHDALYVVGALDETLELRGLRYHPIDIETSVSRIHRSIAECAVFTWTNLLVVVVELCGSEQEALDLVPLVTNVVLEEHYLIVGVVVVVDPGVIPINSRGEKQRMHLRDSFLADQLDPIYVAYNM</sequence>
<name>DIP2B_HUMAN</name>
<comment type="function">
    <text evidence="1">Negatively regulates axonal outgrowth and is essential for normal synaptic transmission. Not required for regulation of axon polarity. Promotes acetylation of alpha-tubulin.</text>
</comment>
<comment type="subunit">
    <text evidence="1">Interacts with alpha-tubulin.</text>
</comment>
<comment type="subcellular location">
    <subcellularLocation>
        <location evidence="1">Cell projection</location>
        <location evidence="1">Dendrite</location>
    </subcellularLocation>
    <subcellularLocation>
        <location evidence="1">Cell projection</location>
        <location evidence="1">Axon</location>
    </subcellularLocation>
    <subcellularLocation>
        <location evidence="1">Perikaryon</location>
    </subcellularLocation>
</comment>
<comment type="tissue specificity">
    <text evidence="4 5">Moderately expressed in adult brain, placenta, skeletal muscle, heart, kidney, pancreas, lung, spleen and colon. Expression was weaker in adult liver, kidney, spleen, and ovary, and in fetal brain and liver. In the brain, it is expressed in the cerebral cortex; the frontal, parietal, occipital and temporal lobes; the paracentral gyrus; the pons; the corpus callosum and the hippocampus. Highest expression levels in the brain were found in the cerebral cortex and the frontal and parietal lobes.</text>
</comment>
<comment type="similarity">
    <text evidence="6">Belongs to the DIP2 family.</text>
</comment>
<comment type="sequence caution" evidence="6">
    <conflict type="miscellaneous discrepancy">
        <sequence resource="EMBL-CDS" id="AAH75027"/>
    </conflict>
    <text>Contaminating sequence.</text>
</comment>
<comment type="sequence caution" evidence="6">
    <conflict type="miscellaneous discrepancy">
        <sequence resource="EMBL-CDS" id="BAC03705"/>
    </conflict>
    <text>Contaminating sequence.</text>
</comment>
<comment type="sequence caution" evidence="6">
    <conflict type="erroneous initiation">
        <sequence resource="EMBL-CDS" id="BAC05025"/>
    </conflict>
    <text>Truncated N-terminus.</text>
</comment>
<comment type="sequence caution" evidence="6">
    <conflict type="erroneous gene model prediction">
        <sequence resource="EMBL-CDS" id="EAW58149"/>
    </conflict>
</comment>
<reference key="1">
    <citation type="journal article" date="2006" name="Nature">
        <title>The finished DNA sequence of human chromosome 12.</title>
        <authorList>
            <person name="Scherer S.E."/>
            <person name="Muzny D.M."/>
            <person name="Buhay C.J."/>
            <person name="Chen R."/>
            <person name="Cree A."/>
            <person name="Ding Y."/>
            <person name="Dugan-Rocha S."/>
            <person name="Gill R."/>
            <person name="Gunaratne P."/>
            <person name="Harris R.A."/>
            <person name="Hawes A.C."/>
            <person name="Hernandez J."/>
            <person name="Hodgson A.V."/>
            <person name="Hume J."/>
            <person name="Jackson A."/>
            <person name="Khan Z.M."/>
            <person name="Kovar-Smith C."/>
            <person name="Lewis L.R."/>
            <person name="Lozado R.J."/>
            <person name="Metzker M.L."/>
            <person name="Milosavljevic A."/>
            <person name="Miner G.R."/>
            <person name="Montgomery K.T."/>
            <person name="Morgan M.B."/>
            <person name="Nazareth L.V."/>
            <person name="Scott G."/>
            <person name="Sodergren E."/>
            <person name="Song X.-Z."/>
            <person name="Steffen D."/>
            <person name="Lovering R.C."/>
            <person name="Wheeler D.A."/>
            <person name="Worley K.C."/>
            <person name="Yuan Y."/>
            <person name="Zhang Z."/>
            <person name="Adams C.Q."/>
            <person name="Ansari-Lari M.A."/>
            <person name="Ayele M."/>
            <person name="Brown M.J."/>
            <person name="Chen G."/>
            <person name="Chen Z."/>
            <person name="Clerc-Blankenburg K.P."/>
            <person name="Davis C."/>
            <person name="Delgado O."/>
            <person name="Dinh H.H."/>
            <person name="Draper H."/>
            <person name="Gonzalez-Garay M.L."/>
            <person name="Havlak P."/>
            <person name="Jackson L.R."/>
            <person name="Jacob L.S."/>
            <person name="Kelly S.H."/>
            <person name="Li L."/>
            <person name="Li Z."/>
            <person name="Liu J."/>
            <person name="Liu W."/>
            <person name="Lu J."/>
            <person name="Maheshwari M."/>
            <person name="Nguyen B.-V."/>
            <person name="Okwuonu G.O."/>
            <person name="Pasternak S."/>
            <person name="Perez L.M."/>
            <person name="Plopper F.J.H."/>
            <person name="Santibanez J."/>
            <person name="Shen H."/>
            <person name="Tabor P.E."/>
            <person name="Verduzco D."/>
            <person name="Waldron L."/>
            <person name="Wang Q."/>
            <person name="Williams G.A."/>
            <person name="Zhang J."/>
            <person name="Zhou J."/>
            <person name="Allen C.C."/>
            <person name="Amin A.G."/>
            <person name="Anyalebechi V."/>
            <person name="Bailey M."/>
            <person name="Barbaria J.A."/>
            <person name="Bimage K.E."/>
            <person name="Bryant N.P."/>
            <person name="Burch P.E."/>
            <person name="Burkett C.E."/>
            <person name="Burrell K.L."/>
            <person name="Calderon E."/>
            <person name="Cardenas V."/>
            <person name="Carter K."/>
            <person name="Casias K."/>
            <person name="Cavazos I."/>
            <person name="Cavazos S.R."/>
            <person name="Ceasar H."/>
            <person name="Chacko J."/>
            <person name="Chan S.N."/>
            <person name="Chavez D."/>
            <person name="Christopoulos C."/>
            <person name="Chu J."/>
            <person name="Cockrell R."/>
            <person name="Cox C.D."/>
            <person name="Dang M."/>
            <person name="Dathorne S.R."/>
            <person name="David R."/>
            <person name="Davis C.M."/>
            <person name="Davy-Carroll L."/>
            <person name="Deshazo D.R."/>
            <person name="Donlin J.E."/>
            <person name="D'Souza L."/>
            <person name="Eaves K.A."/>
            <person name="Egan A."/>
            <person name="Emery-Cohen A.J."/>
            <person name="Escotto M."/>
            <person name="Flagg N."/>
            <person name="Forbes L.D."/>
            <person name="Gabisi A.M."/>
            <person name="Garza M."/>
            <person name="Hamilton C."/>
            <person name="Henderson N."/>
            <person name="Hernandez O."/>
            <person name="Hines S."/>
            <person name="Hogues M.E."/>
            <person name="Huang M."/>
            <person name="Idlebird D.G."/>
            <person name="Johnson R."/>
            <person name="Jolivet A."/>
            <person name="Jones S."/>
            <person name="Kagan R."/>
            <person name="King L.M."/>
            <person name="Leal B."/>
            <person name="Lebow H."/>
            <person name="Lee S."/>
            <person name="LeVan J.M."/>
            <person name="Lewis L.C."/>
            <person name="London P."/>
            <person name="Lorensuhewa L.M."/>
            <person name="Loulseged H."/>
            <person name="Lovett D.A."/>
            <person name="Lucier A."/>
            <person name="Lucier R.L."/>
            <person name="Ma J."/>
            <person name="Madu R.C."/>
            <person name="Mapua P."/>
            <person name="Martindale A.D."/>
            <person name="Martinez E."/>
            <person name="Massey E."/>
            <person name="Mawhiney S."/>
            <person name="Meador M.G."/>
            <person name="Mendez S."/>
            <person name="Mercado C."/>
            <person name="Mercado I.C."/>
            <person name="Merritt C.E."/>
            <person name="Miner Z.L."/>
            <person name="Minja E."/>
            <person name="Mitchell T."/>
            <person name="Mohabbat F."/>
            <person name="Mohabbat K."/>
            <person name="Montgomery B."/>
            <person name="Moore N."/>
            <person name="Morris S."/>
            <person name="Munidasa M."/>
            <person name="Ngo R.N."/>
            <person name="Nguyen N.B."/>
            <person name="Nickerson E."/>
            <person name="Nwaokelemeh O.O."/>
            <person name="Nwokenkwo S."/>
            <person name="Obregon M."/>
            <person name="Oguh M."/>
            <person name="Oragunye N."/>
            <person name="Oviedo R.J."/>
            <person name="Parish B.J."/>
            <person name="Parker D.N."/>
            <person name="Parrish J."/>
            <person name="Parks K.L."/>
            <person name="Paul H.A."/>
            <person name="Payton B.A."/>
            <person name="Perez A."/>
            <person name="Perrin W."/>
            <person name="Pickens A."/>
            <person name="Primus E.L."/>
            <person name="Pu L.-L."/>
            <person name="Puazo M."/>
            <person name="Quiles M.M."/>
            <person name="Quiroz J.B."/>
            <person name="Rabata D."/>
            <person name="Reeves K."/>
            <person name="Ruiz S.J."/>
            <person name="Shao H."/>
            <person name="Sisson I."/>
            <person name="Sonaike T."/>
            <person name="Sorelle R.P."/>
            <person name="Sutton A.E."/>
            <person name="Svatek A.F."/>
            <person name="Svetz L.A."/>
            <person name="Tamerisa K.S."/>
            <person name="Taylor T.R."/>
            <person name="Teague B."/>
            <person name="Thomas N."/>
            <person name="Thorn R.D."/>
            <person name="Trejos Z.Y."/>
            <person name="Trevino B.K."/>
            <person name="Ukegbu O.N."/>
            <person name="Urban J.B."/>
            <person name="Vasquez L.I."/>
            <person name="Vera V.A."/>
            <person name="Villasana D.M."/>
            <person name="Wang L."/>
            <person name="Ward-Moore S."/>
            <person name="Warren J.T."/>
            <person name="Wei X."/>
            <person name="White F."/>
            <person name="Williamson A.L."/>
            <person name="Wleczyk R."/>
            <person name="Wooden H.S."/>
            <person name="Wooden S.H."/>
            <person name="Yen J."/>
            <person name="Yoon L."/>
            <person name="Yoon V."/>
            <person name="Zorrilla S.E."/>
            <person name="Nelson D."/>
            <person name="Kucherlapati R."/>
            <person name="Weinstock G."/>
            <person name="Gibbs R.A."/>
        </authorList>
    </citation>
    <scope>NUCLEOTIDE SEQUENCE [LARGE SCALE GENOMIC DNA]</scope>
</reference>
<reference key="2">
    <citation type="submission" date="2005-07" db="EMBL/GenBank/DDBJ databases">
        <authorList>
            <person name="Mural R.J."/>
            <person name="Istrail S."/>
            <person name="Sutton G.G."/>
            <person name="Florea L."/>
            <person name="Halpern A.L."/>
            <person name="Mobarry C.M."/>
            <person name="Lippert R."/>
            <person name="Walenz B."/>
            <person name="Shatkay H."/>
            <person name="Dew I."/>
            <person name="Miller J.R."/>
            <person name="Flanigan M.J."/>
            <person name="Edwards N.J."/>
            <person name="Bolanos R."/>
            <person name="Fasulo D."/>
            <person name="Halldorsson B.V."/>
            <person name="Hannenhalli S."/>
            <person name="Turner R."/>
            <person name="Yooseph S."/>
            <person name="Lu F."/>
            <person name="Nusskern D.R."/>
            <person name="Shue B.C."/>
            <person name="Zheng X.H."/>
            <person name="Zhong F."/>
            <person name="Delcher A.L."/>
            <person name="Huson D.H."/>
            <person name="Kravitz S.A."/>
            <person name="Mouchard L."/>
            <person name="Reinert K."/>
            <person name="Remington K.A."/>
            <person name="Clark A.G."/>
            <person name="Waterman M.S."/>
            <person name="Eichler E.E."/>
            <person name="Adams M.D."/>
            <person name="Hunkapiller M.W."/>
            <person name="Myers E.W."/>
            <person name="Venter J.C."/>
        </authorList>
    </citation>
    <scope>NUCLEOTIDE SEQUENCE [LARGE SCALE GENOMIC DNA]</scope>
</reference>
<reference key="3">
    <citation type="journal article" date="2004" name="Nat. Genet.">
        <title>Complete sequencing and characterization of 21,243 full-length human cDNAs.</title>
        <authorList>
            <person name="Ota T."/>
            <person name="Suzuki Y."/>
            <person name="Nishikawa T."/>
            <person name="Otsuki T."/>
            <person name="Sugiyama T."/>
            <person name="Irie R."/>
            <person name="Wakamatsu A."/>
            <person name="Hayashi K."/>
            <person name="Sato H."/>
            <person name="Nagai K."/>
            <person name="Kimura K."/>
            <person name="Makita H."/>
            <person name="Sekine M."/>
            <person name="Obayashi M."/>
            <person name="Nishi T."/>
            <person name="Shibahara T."/>
            <person name="Tanaka T."/>
            <person name="Ishii S."/>
            <person name="Yamamoto J."/>
            <person name="Saito K."/>
            <person name="Kawai Y."/>
            <person name="Isono Y."/>
            <person name="Nakamura Y."/>
            <person name="Nagahari K."/>
            <person name="Murakami K."/>
            <person name="Yasuda T."/>
            <person name="Iwayanagi T."/>
            <person name="Wagatsuma M."/>
            <person name="Shiratori A."/>
            <person name="Sudo H."/>
            <person name="Hosoiri T."/>
            <person name="Kaku Y."/>
            <person name="Kodaira H."/>
            <person name="Kondo H."/>
            <person name="Sugawara M."/>
            <person name="Takahashi M."/>
            <person name="Kanda K."/>
            <person name="Yokoi T."/>
            <person name="Furuya T."/>
            <person name="Kikkawa E."/>
            <person name="Omura Y."/>
            <person name="Abe K."/>
            <person name="Kamihara K."/>
            <person name="Katsuta N."/>
            <person name="Sato K."/>
            <person name="Tanikawa M."/>
            <person name="Yamazaki M."/>
            <person name="Ninomiya K."/>
            <person name="Ishibashi T."/>
            <person name="Yamashita H."/>
            <person name="Murakawa K."/>
            <person name="Fujimori K."/>
            <person name="Tanai H."/>
            <person name="Kimata M."/>
            <person name="Watanabe M."/>
            <person name="Hiraoka S."/>
            <person name="Chiba Y."/>
            <person name="Ishida S."/>
            <person name="Ono Y."/>
            <person name="Takiguchi S."/>
            <person name="Watanabe S."/>
            <person name="Yosida M."/>
            <person name="Hotuta T."/>
            <person name="Kusano J."/>
            <person name="Kanehori K."/>
            <person name="Takahashi-Fujii A."/>
            <person name="Hara H."/>
            <person name="Tanase T.-O."/>
            <person name="Nomura Y."/>
            <person name="Togiya S."/>
            <person name="Komai F."/>
            <person name="Hara R."/>
            <person name="Takeuchi K."/>
            <person name="Arita M."/>
            <person name="Imose N."/>
            <person name="Musashino K."/>
            <person name="Yuuki H."/>
            <person name="Oshima A."/>
            <person name="Sasaki N."/>
            <person name="Aotsuka S."/>
            <person name="Yoshikawa Y."/>
            <person name="Matsunawa H."/>
            <person name="Ichihara T."/>
            <person name="Shiohata N."/>
            <person name="Sano S."/>
            <person name="Moriya S."/>
            <person name="Momiyama H."/>
            <person name="Satoh N."/>
            <person name="Takami S."/>
            <person name="Terashima Y."/>
            <person name="Suzuki O."/>
            <person name="Nakagawa S."/>
            <person name="Senoh A."/>
            <person name="Mizoguchi H."/>
            <person name="Goto Y."/>
            <person name="Shimizu F."/>
            <person name="Wakebe H."/>
            <person name="Hishigaki H."/>
            <person name="Watanabe T."/>
            <person name="Sugiyama A."/>
            <person name="Takemoto M."/>
            <person name="Kawakami B."/>
            <person name="Yamazaki M."/>
            <person name="Watanabe K."/>
            <person name="Kumagai A."/>
            <person name="Itakura S."/>
            <person name="Fukuzumi Y."/>
            <person name="Fujimori Y."/>
            <person name="Komiyama M."/>
            <person name="Tashiro H."/>
            <person name="Tanigami A."/>
            <person name="Fujiwara T."/>
            <person name="Ono T."/>
            <person name="Yamada K."/>
            <person name="Fujii Y."/>
            <person name="Ozaki K."/>
            <person name="Hirao M."/>
            <person name="Ohmori Y."/>
            <person name="Kawabata A."/>
            <person name="Hikiji T."/>
            <person name="Kobatake N."/>
            <person name="Inagaki H."/>
            <person name="Ikema Y."/>
            <person name="Okamoto S."/>
            <person name="Okitani R."/>
            <person name="Kawakami T."/>
            <person name="Noguchi S."/>
            <person name="Itoh T."/>
            <person name="Shigeta K."/>
            <person name="Senba T."/>
            <person name="Matsumura K."/>
            <person name="Nakajima Y."/>
            <person name="Mizuno T."/>
            <person name="Morinaga M."/>
            <person name="Sasaki M."/>
            <person name="Togashi T."/>
            <person name="Oyama M."/>
            <person name="Hata H."/>
            <person name="Watanabe M."/>
            <person name="Komatsu T."/>
            <person name="Mizushima-Sugano J."/>
            <person name="Satoh T."/>
            <person name="Shirai Y."/>
            <person name="Takahashi Y."/>
            <person name="Nakagawa K."/>
            <person name="Okumura K."/>
            <person name="Nagase T."/>
            <person name="Nomura N."/>
            <person name="Kikuchi H."/>
            <person name="Masuho Y."/>
            <person name="Yamashita R."/>
            <person name="Nakai K."/>
            <person name="Yada T."/>
            <person name="Nakamura Y."/>
            <person name="Ohara O."/>
            <person name="Isogai T."/>
            <person name="Sugano S."/>
        </authorList>
    </citation>
    <scope>NUCLEOTIDE SEQUENCE [LARGE SCALE MRNA] OF 1-372 AND 764-1576</scope>
    <source>
        <tissue>Brain</tissue>
        <tissue>Synovium</tissue>
    </source>
</reference>
<reference key="4">
    <citation type="journal article" date="2004" name="Genome Res.">
        <title>The status, quality, and expansion of the NIH full-length cDNA project: the Mammalian Gene Collection (MGC).</title>
        <authorList>
            <consortium name="The MGC Project Team"/>
        </authorList>
    </citation>
    <scope>NUCLEOTIDE SEQUENCE [LARGE SCALE MRNA] OF 1-372</scope>
    <source>
        <tissue>Brain</tissue>
    </source>
</reference>
<reference key="5">
    <citation type="journal article" date="2000" name="DNA Res.">
        <title>Prediction of the coding sequences of unidentified human genes. XVII. The complete sequences of 100 new cDNA clones from brain which code for large proteins in vitro.</title>
        <authorList>
            <person name="Nagase T."/>
            <person name="Kikuno R."/>
            <person name="Ishikawa K."/>
            <person name="Hirosawa M."/>
            <person name="Ohara O."/>
        </authorList>
    </citation>
    <scope>NUCLEOTIDE SEQUENCE [LARGE SCALE MRNA] OF 411-1576</scope>
    <scope>TISSUE SPECIFICITY</scope>
    <source>
        <tissue>Fetal brain</tissue>
    </source>
</reference>
<reference key="6">
    <citation type="journal article" date="2007" name="Am. J. Hum. Genet.">
        <title>CGG-repeat expansion in the DIP2B gene is associated with the fragile site FRA12A on chromosome 12q13.1.</title>
        <authorList>
            <person name="Winnepenninckx B."/>
            <person name="Debacker K."/>
            <person name="Ramsay J."/>
            <person name="Smeets D."/>
            <person name="Smits A."/>
            <person name="FitzPatrick D.R."/>
            <person name="Kooy R.F."/>
        </authorList>
    </citation>
    <scope>TISSUE SPECIFICITY</scope>
</reference>
<reference key="7">
    <citation type="journal article" date="2008" name="Proc. Natl. Acad. Sci. U.S.A.">
        <title>A quantitative atlas of mitotic phosphorylation.</title>
        <authorList>
            <person name="Dephoure N."/>
            <person name="Zhou C."/>
            <person name="Villen J."/>
            <person name="Beausoleil S.A."/>
            <person name="Bakalarski C.E."/>
            <person name="Elledge S.J."/>
            <person name="Gygi S.P."/>
        </authorList>
    </citation>
    <scope>PHOSPHORYLATION [LARGE SCALE ANALYSIS] AT SER-50; SER-53; THR-71; SER-100; THR-140; SER-146 AND SER-148</scope>
    <scope>IDENTIFICATION BY MASS SPECTROMETRY [LARGE SCALE ANALYSIS]</scope>
    <source>
        <tissue>Cervix carcinoma</tissue>
    </source>
</reference>
<reference key="8">
    <citation type="journal article" date="2009" name="Sci. Signal.">
        <title>Quantitative phosphoproteomic analysis of T cell receptor signaling reveals system-wide modulation of protein-protein interactions.</title>
        <authorList>
            <person name="Mayya V."/>
            <person name="Lundgren D.H."/>
            <person name="Hwang S.-I."/>
            <person name="Rezaul K."/>
            <person name="Wu L."/>
            <person name="Eng J.K."/>
            <person name="Rodionov V."/>
            <person name="Han D.K."/>
        </authorList>
    </citation>
    <scope>PHOSPHORYLATION [LARGE SCALE ANALYSIS] AT SER-203</scope>
    <scope>IDENTIFICATION BY MASS SPECTROMETRY [LARGE SCALE ANALYSIS]</scope>
    <source>
        <tissue>Leukemic T-cell</tissue>
    </source>
</reference>
<reference key="9">
    <citation type="journal article" date="2010" name="Sci. Signal.">
        <title>Quantitative phosphoproteomics reveals widespread full phosphorylation site occupancy during mitosis.</title>
        <authorList>
            <person name="Olsen J.V."/>
            <person name="Vermeulen M."/>
            <person name="Santamaria A."/>
            <person name="Kumar C."/>
            <person name="Miller M.L."/>
            <person name="Jensen L.J."/>
            <person name="Gnad F."/>
            <person name="Cox J."/>
            <person name="Jensen T.S."/>
            <person name="Nigg E.A."/>
            <person name="Brunak S."/>
            <person name="Mann M."/>
        </authorList>
    </citation>
    <scope>PHOSPHORYLATION [LARGE SCALE ANALYSIS] AT SER-53 AND SER-100</scope>
    <scope>IDENTIFICATION BY MASS SPECTROMETRY [LARGE SCALE ANALYSIS]</scope>
    <source>
        <tissue>Cervix carcinoma</tissue>
    </source>
</reference>
<reference key="10">
    <citation type="journal article" date="2011" name="BMC Syst. Biol.">
        <title>Initial characterization of the human central proteome.</title>
        <authorList>
            <person name="Burkard T.R."/>
            <person name="Planyavsky M."/>
            <person name="Kaupe I."/>
            <person name="Breitwieser F.P."/>
            <person name="Buerckstuemmer T."/>
            <person name="Bennett K.L."/>
            <person name="Superti-Furga G."/>
            <person name="Colinge J."/>
        </authorList>
    </citation>
    <scope>IDENTIFICATION BY MASS SPECTROMETRY [LARGE SCALE ANALYSIS]</scope>
</reference>
<reference key="11">
    <citation type="journal article" date="2013" name="J. Proteome Res.">
        <title>Toward a comprehensive characterization of a human cancer cell phosphoproteome.</title>
        <authorList>
            <person name="Zhou H."/>
            <person name="Di Palma S."/>
            <person name="Preisinger C."/>
            <person name="Peng M."/>
            <person name="Polat A.N."/>
            <person name="Heck A.J."/>
            <person name="Mohammed S."/>
        </authorList>
    </citation>
    <scope>PHOSPHORYLATION [LARGE SCALE ANALYSIS] AT SER-9; SER-53; SER-100; SER-178; SER-193; SER-203 AND SER-259</scope>
    <scope>IDENTIFICATION BY MASS SPECTROMETRY [LARGE SCALE ANALYSIS]</scope>
    <source>
        <tissue>Cervix carcinoma</tissue>
        <tissue>Erythroleukemia</tissue>
    </source>
</reference>
<reference key="12">
    <citation type="journal article" date="2014" name="J. Proteomics">
        <title>An enzyme assisted RP-RPLC approach for in-depth analysis of human liver phosphoproteome.</title>
        <authorList>
            <person name="Bian Y."/>
            <person name="Song C."/>
            <person name="Cheng K."/>
            <person name="Dong M."/>
            <person name="Wang F."/>
            <person name="Huang J."/>
            <person name="Sun D."/>
            <person name="Wang L."/>
            <person name="Ye M."/>
            <person name="Zou H."/>
        </authorList>
    </citation>
    <scope>IDENTIFICATION BY MASS SPECTROMETRY [LARGE SCALE ANALYSIS]</scope>
    <source>
        <tissue>Liver</tissue>
    </source>
</reference>
<feature type="chain" id="PRO_0000318736" description="Disco-interacting protein 2 homolog B">
    <location>
        <begin position="1"/>
        <end position="1576"/>
    </location>
</feature>
<feature type="domain" description="DMAP1-binding" evidence="2">
    <location>
        <begin position="12"/>
        <end position="131"/>
    </location>
</feature>
<feature type="region of interest" description="Disordered" evidence="3">
    <location>
        <begin position="31"/>
        <end position="167"/>
    </location>
</feature>
<feature type="region of interest" description="Disordered" evidence="3">
    <location>
        <begin position="179"/>
        <end position="201"/>
    </location>
</feature>
<feature type="region of interest" description="Disordered" evidence="3">
    <location>
        <begin position="217"/>
        <end position="246"/>
    </location>
</feature>
<feature type="compositionally biased region" description="Polar residues" evidence="3">
    <location>
        <begin position="52"/>
        <end position="62"/>
    </location>
</feature>
<feature type="compositionally biased region" description="Low complexity" evidence="3">
    <location>
        <begin position="70"/>
        <end position="83"/>
    </location>
</feature>
<feature type="compositionally biased region" description="Basic and acidic residues" evidence="3">
    <location>
        <begin position="92"/>
        <end position="104"/>
    </location>
</feature>
<feature type="compositionally biased region" description="Low complexity" evidence="3">
    <location>
        <begin position="155"/>
        <end position="167"/>
    </location>
</feature>
<feature type="compositionally biased region" description="Low complexity" evidence="3">
    <location>
        <begin position="182"/>
        <end position="193"/>
    </location>
</feature>
<feature type="compositionally biased region" description="Low complexity" evidence="3">
    <location>
        <begin position="223"/>
        <end position="234"/>
    </location>
</feature>
<feature type="modified residue" description="Phosphoserine" evidence="10">
    <location>
        <position position="9"/>
    </location>
</feature>
<feature type="modified residue" description="Phosphoserine" evidence="7">
    <location>
        <position position="50"/>
    </location>
</feature>
<feature type="modified residue" description="Phosphoserine" evidence="7 9 10">
    <location>
        <position position="53"/>
    </location>
</feature>
<feature type="modified residue" description="Phosphothreonine" evidence="7">
    <location>
        <position position="71"/>
    </location>
</feature>
<feature type="modified residue" description="Phosphoserine" evidence="7 9 10">
    <location>
        <position position="100"/>
    </location>
</feature>
<feature type="modified residue" description="Phosphothreonine" evidence="7">
    <location>
        <position position="140"/>
    </location>
</feature>
<feature type="modified residue" description="Phosphoserine" evidence="7">
    <location>
        <position position="146"/>
    </location>
</feature>
<feature type="modified residue" description="Phosphoserine" evidence="7">
    <location>
        <position position="148"/>
    </location>
</feature>
<feature type="modified residue" description="Phosphoserine" evidence="1">
    <location>
        <position position="153"/>
    </location>
</feature>
<feature type="modified residue" description="Phosphoserine" evidence="10">
    <location>
        <position position="178"/>
    </location>
</feature>
<feature type="modified residue" description="Phosphoserine" evidence="10">
    <location>
        <position position="193"/>
    </location>
</feature>
<feature type="modified residue" description="Phosphoserine" evidence="8 10">
    <location>
        <position position="203"/>
    </location>
</feature>
<feature type="modified residue" description="Phosphoserine" evidence="10">
    <location>
        <position position="259"/>
    </location>
</feature>
<feature type="sequence variant" id="VAR_038861" description="In dbSNP:rs11169525.">
    <original>I</original>
    <variation>V</variation>
    <location>
        <position position="792"/>
    </location>
</feature>
<feature type="sequence conflict" description="In Ref. 3; BAC03705." evidence="6" ref="3">
    <original>F</original>
    <variation>L</variation>
    <location>
        <position position="216"/>
    </location>
</feature>
<feature type="sequence conflict" description="In Ref. 3; BAC03705." evidence="6" ref="3">
    <original>S</original>
    <variation>P</variation>
    <location>
        <position position="245"/>
    </location>
</feature>
<feature type="sequence conflict" description="In Ref. 3; BAC05025." evidence="6" ref="3">
    <original>W</original>
    <variation>R</variation>
    <location>
        <position position="1432"/>
    </location>
</feature>
<proteinExistence type="evidence at protein level"/>
<keyword id="KW-0966">Cell projection</keyword>
<keyword id="KW-0524">Neurogenesis</keyword>
<keyword id="KW-0597">Phosphoprotein</keyword>
<keyword id="KW-1267">Proteomics identification</keyword>
<keyword id="KW-1185">Reference proteome</keyword>
<accession>Q9P265</accession>
<accession>Q6B011</accession>
<accession>Q8N1L5</accession>
<accession>Q8NB38</accession>
<protein>
    <recommendedName>
        <fullName>Disco-interacting protein 2 homolog B</fullName>
        <shortName>DIP2 homolog B</shortName>
    </recommendedName>
</protein>
<organism>
    <name type="scientific">Homo sapiens</name>
    <name type="common">Human</name>
    <dbReference type="NCBI Taxonomy" id="9606"/>
    <lineage>
        <taxon>Eukaryota</taxon>
        <taxon>Metazoa</taxon>
        <taxon>Chordata</taxon>
        <taxon>Craniata</taxon>
        <taxon>Vertebrata</taxon>
        <taxon>Euteleostomi</taxon>
        <taxon>Mammalia</taxon>
        <taxon>Eutheria</taxon>
        <taxon>Euarchontoglires</taxon>
        <taxon>Primates</taxon>
        <taxon>Haplorrhini</taxon>
        <taxon>Catarrhini</taxon>
        <taxon>Hominidae</taxon>
        <taxon>Homo</taxon>
    </lineage>
</organism>